<accession>Q7VRE1</accession>
<reference key="1">
    <citation type="journal article" date="2003" name="Proc. Natl. Acad. Sci. U.S.A.">
        <title>The genome sequence of Blochmannia floridanus: comparative analysis of reduced genomes.</title>
        <authorList>
            <person name="Gil R."/>
            <person name="Silva F.J."/>
            <person name="Zientz E."/>
            <person name="Delmotte F."/>
            <person name="Gonzalez-Candelas F."/>
            <person name="Latorre A."/>
            <person name="Rausell C."/>
            <person name="Kamerbeek J."/>
            <person name="Gadau J."/>
            <person name="Hoelldobler B."/>
            <person name="van Ham R.C.H.J."/>
            <person name="Gross R."/>
            <person name="Moya A."/>
        </authorList>
    </citation>
    <scope>NUCLEOTIDE SEQUENCE [LARGE SCALE GENOMIC DNA]</scope>
</reference>
<dbReference type="EC" id="2.5.1.31" evidence="1"/>
<dbReference type="EMBL" id="BX248583">
    <property type="protein sequence ID" value="CAD83347.1"/>
    <property type="molecule type" value="Genomic_DNA"/>
</dbReference>
<dbReference type="SMR" id="Q7VRE1"/>
<dbReference type="STRING" id="203907.Bfl276"/>
<dbReference type="KEGG" id="bfl:Bfl276"/>
<dbReference type="eggNOG" id="COG0020">
    <property type="taxonomic scope" value="Bacteria"/>
</dbReference>
<dbReference type="HOGENOM" id="CLU_038505_1_1_6"/>
<dbReference type="OrthoDB" id="4191603at2"/>
<dbReference type="Proteomes" id="UP000002192">
    <property type="component" value="Chromosome"/>
</dbReference>
<dbReference type="GO" id="GO:0005829">
    <property type="term" value="C:cytosol"/>
    <property type="evidence" value="ECO:0007669"/>
    <property type="project" value="TreeGrafter"/>
</dbReference>
<dbReference type="GO" id="GO:0008834">
    <property type="term" value="F:ditrans,polycis-undecaprenyl-diphosphate synthase [(2E,6E)-farnesyl-diphosphate specific] activity"/>
    <property type="evidence" value="ECO:0007669"/>
    <property type="project" value="UniProtKB-UniRule"/>
</dbReference>
<dbReference type="GO" id="GO:0000287">
    <property type="term" value="F:magnesium ion binding"/>
    <property type="evidence" value="ECO:0007669"/>
    <property type="project" value="UniProtKB-UniRule"/>
</dbReference>
<dbReference type="GO" id="GO:0071555">
    <property type="term" value="P:cell wall organization"/>
    <property type="evidence" value="ECO:0007669"/>
    <property type="project" value="UniProtKB-KW"/>
</dbReference>
<dbReference type="GO" id="GO:0009252">
    <property type="term" value="P:peptidoglycan biosynthetic process"/>
    <property type="evidence" value="ECO:0007669"/>
    <property type="project" value="UniProtKB-UniRule"/>
</dbReference>
<dbReference type="GO" id="GO:0016094">
    <property type="term" value="P:polyprenol biosynthetic process"/>
    <property type="evidence" value="ECO:0007669"/>
    <property type="project" value="TreeGrafter"/>
</dbReference>
<dbReference type="GO" id="GO:0008360">
    <property type="term" value="P:regulation of cell shape"/>
    <property type="evidence" value="ECO:0007669"/>
    <property type="project" value="UniProtKB-KW"/>
</dbReference>
<dbReference type="CDD" id="cd00475">
    <property type="entry name" value="Cis_IPPS"/>
    <property type="match status" value="1"/>
</dbReference>
<dbReference type="FunFam" id="3.40.1180.10:FF:000001">
    <property type="entry name" value="(2E,6E)-farnesyl-diphosphate-specific ditrans,polycis-undecaprenyl-diphosphate synthase"/>
    <property type="match status" value="1"/>
</dbReference>
<dbReference type="Gene3D" id="3.40.1180.10">
    <property type="entry name" value="Decaprenyl diphosphate synthase-like"/>
    <property type="match status" value="1"/>
</dbReference>
<dbReference type="HAMAP" id="MF_01139">
    <property type="entry name" value="ISPT"/>
    <property type="match status" value="1"/>
</dbReference>
<dbReference type="InterPro" id="IPR001441">
    <property type="entry name" value="UPP_synth-like"/>
</dbReference>
<dbReference type="InterPro" id="IPR018520">
    <property type="entry name" value="UPP_synth-like_CS"/>
</dbReference>
<dbReference type="InterPro" id="IPR036424">
    <property type="entry name" value="UPP_synth-like_sf"/>
</dbReference>
<dbReference type="NCBIfam" id="TIGR00055">
    <property type="entry name" value="uppS"/>
    <property type="match status" value="1"/>
</dbReference>
<dbReference type="PANTHER" id="PTHR10291:SF0">
    <property type="entry name" value="DEHYDRODOLICHYL DIPHOSPHATE SYNTHASE 2"/>
    <property type="match status" value="1"/>
</dbReference>
<dbReference type="PANTHER" id="PTHR10291">
    <property type="entry name" value="DEHYDRODOLICHYL DIPHOSPHATE SYNTHASE FAMILY MEMBER"/>
    <property type="match status" value="1"/>
</dbReference>
<dbReference type="Pfam" id="PF01255">
    <property type="entry name" value="Prenyltransf"/>
    <property type="match status" value="1"/>
</dbReference>
<dbReference type="SUPFAM" id="SSF64005">
    <property type="entry name" value="Undecaprenyl diphosphate synthase"/>
    <property type="match status" value="1"/>
</dbReference>
<dbReference type="PROSITE" id="PS01066">
    <property type="entry name" value="UPP_SYNTHASE"/>
    <property type="match status" value="1"/>
</dbReference>
<keyword id="KW-0133">Cell shape</keyword>
<keyword id="KW-0961">Cell wall biogenesis/degradation</keyword>
<keyword id="KW-0460">Magnesium</keyword>
<keyword id="KW-0479">Metal-binding</keyword>
<keyword id="KW-0573">Peptidoglycan synthesis</keyword>
<keyword id="KW-1185">Reference proteome</keyword>
<keyword id="KW-0808">Transferase</keyword>
<protein>
    <recommendedName>
        <fullName evidence="1">Ditrans,polycis-undecaprenyl-diphosphate synthase ((2E,6E)-farnesyl-diphosphate specific)</fullName>
        <ecNumber evidence="1">2.5.1.31</ecNumber>
    </recommendedName>
    <alternativeName>
        <fullName evidence="1">Ditrans,polycis-undecaprenylcistransferase</fullName>
    </alternativeName>
    <alternativeName>
        <fullName evidence="1">Undecaprenyl diphosphate synthase</fullName>
        <shortName evidence="1">UDS</shortName>
    </alternativeName>
    <alternativeName>
        <fullName evidence="1">Undecaprenyl pyrophosphate synthase</fullName>
        <shortName evidence="1">UPP synthase</shortName>
    </alternativeName>
</protein>
<proteinExistence type="inferred from homology"/>
<name>UPPS_BLOFL</name>
<comment type="function">
    <text evidence="1">Catalyzes the sequential condensation of isopentenyl diphosphate (IPP) with (2E,6E)-farnesyl diphosphate (E,E-FPP) to yield (2Z,6Z,10Z,14Z,18Z,22Z,26Z,30Z,34E,38E)-undecaprenyl diphosphate (di-trans,octa-cis-UPP). UPP is the precursor of glycosyl carrier lipid in the biosynthesis of bacterial cell wall polysaccharide components such as peptidoglycan and lipopolysaccharide.</text>
</comment>
<comment type="catalytic activity">
    <reaction evidence="1">
        <text>8 isopentenyl diphosphate + (2E,6E)-farnesyl diphosphate = di-trans,octa-cis-undecaprenyl diphosphate + 8 diphosphate</text>
        <dbReference type="Rhea" id="RHEA:27551"/>
        <dbReference type="ChEBI" id="CHEBI:33019"/>
        <dbReference type="ChEBI" id="CHEBI:58405"/>
        <dbReference type="ChEBI" id="CHEBI:128769"/>
        <dbReference type="ChEBI" id="CHEBI:175763"/>
        <dbReference type="EC" id="2.5.1.31"/>
    </reaction>
</comment>
<comment type="cofactor">
    <cofactor evidence="1">
        <name>Mg(2+)</name>
        <dbReference type="ChEBI" id="CHEBI:18420"/>
    </cofactor>
    <text evidence="1">Binds 2 magnesium ions per subunit.</text>
</comment>
<comment type="subunit">
    <text evidence="1">Homodimer.</text>
</comment>
<comment type="similarity">
    <text evidence="1">Belongs to the UPP synthase family.</text>
</comment>
<organism>
    <name type="scientific">Blochmanniella floridana</name>
    <dbReference type="NCBI Taxonomy" id="203907"/>
    <lineage>
        <taxon>Bacteria</taxon>
        <taxon>Pseudomonadati</taxon>
        <taxon>Pseudomonadota</taxon>
        <taxon>Gammaproteobacteria</taxon>
        <taxon>Enterobacterales</taxon>
        <taxon>Enterobacteriaceae</taxon>
        <taxon>ant endosymbionts</taxon>
        <taxon>Candidatus Blochmanniella</taxon>
    </lineage>
</organism>
<sequence length="250" mass="28779">MILSQFDQNIQPLSSAILPRHIAIIMDGNGRWARGRGKLRIVGHQAGFQAARRAVRFAVHCRFNALTLYAFSSENWTRSNTEISSLMQLFIYALNSEINNLNKNNIKLRIIGDVNRFTQELQDCIYRSEQLTSNNNGLNLNIAANYGGRWDIVQGVKKIIAQIQKGVLKPNQINENILCKYVCMNELSPVDLVIRTGGEHRISNFLLWQIAYAELFFTDVLWPDFNDIVFRRALHSFMKRDRRFGKSAFI</sequence>
<evidence type="ECO:0000255" key="1">
    <source>
        <dbReference type="HAMAP-Rule" id="MF_01139"/>
    </source>
</evidence>
<feature type="chain" id="PRO_0000123589" description="Ditrans,polycis-undecaprenyl-diphosphate synthase ((2E,6E)-farnesyl-diphosphate specific)">
    <location>
        <begin position="1"/>
        <end position="250"/>
    </location>
</feature>
<feature type="active site" evidence="1">
    <location>
        <position position="27"/>
    </location>
</feature>
<feature type="active site" description="Proton acceptor" evidence="1">
    <location>
        <position position="75"/>
    </location>
</feature>
<feature type="binding site" evidence="1">
    <location>
        <position position="27"/>
    </location>
    <ligand>
        <name>Mg(2+)</name>
        <dbReference type="ChEBI" id="CHEBI:18420"/>
    </ligand>
</feature>
<feature type="binding site" evidence="1">
    <location>
        <begin position="28"/>
        <end position="31"/>
    </location>
    <ligand>
        <name>substrate</name>
    </ligand>
</feature>
<feature type="binding site" evidence="1">
    <location>
        <position position="32"/>
    </location>
    <ligand>
        <name>substrate</name>
    </ligand>
</feature>
<feature type="binding site" evidence="1">
    <location>
        <position position="40"/>
    </location>
    <ligand>
        <name>substrate</name>
    </ligand>
</feature>
<feature type="binding site" evidence="1">
    <location>
        <position position="44"/>
    </location>
    <ligand>
        <name>substrate</name>
    </ligand>
</feature>
<feature type="binding site" evidence="1">
    <location>
        <begin position="72"/>
        <end position="74"/>
    </location>
    <ligand>
        <name>substrate</name>
    </ligand>
</feature>
<feature type="binding site" evidence="1">
    <location>
        <position position="76"/>
    </location>
    <ligand>
        <name>substrate</name>
    </ligand>
</feature>
<feature type="binding site" evidence="1">
    <location>
        <position position="78"/>
    </location>
    <ligand>
        <name>substrate</name>
    </ligand>
</feature>
<feature type="binding site" evidence="1">
    <location>
        <position position="195"/>
    </location>
    <ligand>
        <name>substrate</name>
    </ligand>
</feature>
<feature type="binding site" evidence="1">
    <location>
        <position position="200"/>
    </location>
    <ligand>
        <name>Mg(2+)</name>
        <dbReference type="ChEBI" id="CHEBI:18420"/>
    </ligand>
</feature>
<feature type="binding site" evidence="1">
    <location>
        <begin position="201"/>
        <end position="203"/>
    </location>
    <ligand>
        <name>substrate</name>
    </ligand>
</feature>
<feature type="binding site" evidence="1">
    <location>
        <position position="214"/>
    </location>
    <ligand>
        <name>Mg(2+)</name>
        <dbReference type="ChEBI" id="CHEBI:18420"/>
    </ligand>
</feature>
<gene>
    <name evidence="1" type="primary">uppS</name>
    <name type="ordered locus">Bfl276</name>
</gene>